<protein>
    <recommendedName>
        <fullName evidence="11">Cytochrome b-c1 complex subunit Rieske-1, mitochondrial</fullName>
        <ecNumber evidence="1">7.1.1.8</ecNumber>
    </recommendedName>
    <alternativeName>
        <fullName evidence="11">Complex III subunit 5-1</fullName>
    </alternativeName>
    <alternativeName>
        <fullName evidence="11">Rieske iron-sulfur protein 1</fullName>
        <shortName evidence="11">RISP1</shortName>
    </alternativeName>
    <alternativeName>
        <fullName evidence="10">Ubiquinol-cytochrome c reductase iron-sulfur subunit 1</fullName>
    </alternativeName>
</protein>
<feature type="transit peptide" description="Mitochondrion" evidence="2">
    <location>
        <begin position="1"/>
        <end position="60"/>
    </location>
</feature>
<feature type="chain" id="PRO_0000441897" description="Cytochrome b-c1 complex subunit Rieske-1, mitochondrial">
    <location>
        <begin position="61"/>
        <end position="272"/>
    </location>
</feature>
<feature type="topological domain" description="Mitochondrial matrix" evidence="1">
    <location>
        <begin position="61"/>
        <end position="109"/>
    </location>
</feature>
<feature type="transmembrane region" description="Helical" evidence="2">
    <location>
        <begin position="110"/>
        <end position="132"/>
    </location>
</feature>
<feature type="topological domain" description="Mitochondrial intermembrane" evidence="1">
    <location>
        <begin position="133"/>
        <end position="272"/>
    </location>
</feature>
<feature type="domain" description="Rieske" evidence="3">
    <location>
        <begin position="201"/>
        <end position="270"/>
    </location>
</feature>
<feature type="region of interest" description="Disordered" evidence="4">
    <location>
        <begin position="27"/>
        <end position="46"/>
    </location>
</feature>
<feature type="binding site" evidence="3">
    <location>
        <position position="215"/>
    </location>
    <ligand>
        <name>[2Fe-2S] cluster</name>
        <dbReference type="ChEBI" id="CHEBI:190135"/>
    </ligand>
</feature>
<feature type="binding site" evidence="3">
    <location>
        <position position="217"/>
    </location>
    <ligand>
        <name>[2Fe-2S] cluster</name>
        <dbReference type="ChEBI" id="CHEBI:190135"/>
    </ligand>
</feature>
<feature type="binding site" evidence="3">
    <location>
        <position position="234"/>
    </location>
    <ligand>
        <name>[2Fe-2S] cluster</name>
        <dbReference type="ChEBI" id="CHEBI:190135"/>
    </ligand>
</feature>
<feature type="binding site" evidence="3">
    <location>
        <position position="237"/>
    </location>
    <ligand>
        <name>[2Fe-2S] cluster</name>
        <dbReference type="ChEBI" id="CHEBI:190135"/>
    </ligand>
</feature>
<feature type="disulfide bond" evidence="3">
    <location>
        <begin position="220"/>
        <end position="236"/>
    </location>
</feature>
<feature type="sequence conflict" description="In Ref. 5; BAD94896." evidence="11" ref="5">
    <original>E</original>
    <variation>G</variation>
    <location>
        <position position="207"/>
    </location>
</feature>
<feature type="sequence conflict" description="In Ref. 4; AAM62600 and 5; BAD95225." evidence="11" ref="4 5">
    <original>V</original>
    <variation>I</variation>
    <location>
        <position position="210"/>
    </location>
</feature>
<feature type="helix" evidence="15">
    <location>
        <begin position="79"/>
        <end position="85"/>
    </location>
</feature>
<feature type="helix" evidence="14">
    <location>
        <begin position="109"/>
        <end position="137"/>
    </location>
</feature>
<feature type="helix" evidence="14">
    <location>
        <begin position="142"/>
        <end position="145"/>
    </location>
</feature>
<feature type="strand" evidence="14">
    <location>
        <begin position="162"/>
        <end position="165"/>
    </location>
</feature>
<feature type="strand" evidence="14">
    <location>
        <begin position="167"/>
        <end position="169"/>
    </location>
</feature>
<feature type="strand" evidence="14">
    <location>
        <begin position="172"/>
        <end position="175"/>
    </location>
</feature>
<feature type="helix" evidence="14">
    <location>
        <begin position="179"/>
        <end position="184"/>
    </location>
</feature>
<feature type="turn" evidence="14">
    <location>
        <begin position="190"/>
        <end position="192"/>
    </location>
</feature>
<feature type="strand" evidence="14">
    <location>
        <begin position="193"/>
        <end position="195"/>
    </location>
</feature>
<feature type="helix" evidence="14">
    <location>
        <begin position="200"/>
        <end position="202"/>
    </location>
</feature>
<feature type="strand" evidence="14">
    <location>
        <begin position="209"/>
        <end position="212"/>
    </location>
</feature>
<feature type="turn" evidence="14">
    <location>
        <begin position="216"/>
        <end position="218"/>
    </location>
</feature>
<feature type="strand" evidence="14">
    <location>
        <begin position="230"/>
        <end position="233"/>
    </location>
</feature>
<feature type="turn" evidence="14">
    <location>
        <begin position="235"/>
        <end position="237"/>
    </location>
</feature>
<feature type="strand" evidence="14">
    <location>
        <begin position="247"/>
        <end position="251"/>
    </location>
</feature>
<feature type="strand" evidence="14">
    <location>
        <begin position="262"/>
        <end position="265"/>
    </location>
</feature>
<feature type="strand" evidence="14">
    <location>
        <begin position="268"/>
        <end position="270"/>
    </location>
</feature>
<dbReference type="EC" id="7.1.1.8" evidence="1"/>
<dbReference type="EMBL" id="AL163572">
    <property type="protein sequence ID" value="CAB87150.1"/>
    <property type="status" value="ALT_SEQ"/>
    <property type="molecule type" value="Genomic_DNA"/>
</dbReference>
<dbReference type="EMBL" id="CP002688">
    <property type="protein sequence ID" value="AED91893.1"/>
    <property type="molecule type" value="Genomic_DNA"/>
</dbReference>
<dbReference type="EMBL" id="AF375413">
    <property type="protein sequence ID" value="AAK52997.1"/>
    <property type="molecule type" value="mRNA"/>
</dbReference>
<dbReference type="EMBL" id="AY066055">
    <property type="protein sequence ID" value="AAL47422.1"/>
    <property type="molecule type" value="mRNA"/>
</dbReference>
<dbReference type="EMBL" id="AY085370">
    <property type="protein sequence ID" value="AAM62600.1"/>
    <property type="molecule type" value="mRNA"/>
</dbReference>
<dbReference type="EMBL" id="AK221073">
    <property type="protein sequence ID" value="BAD94896.1"/>
    <property type="molecule type" value="mRNA"/>
</dbReference>
<dbReference type="EMBL" id="AK221169">
    <property type="protein sequence ID" value="BAD95225.1"/>
    <property type="molecule type" value="mRNA"/>
</dbReference>
<dbReference type="EMBL" id="Z26705">
    <property type="protein sequence ID" value="CAA81404.1"/>
    <property type="molecule type" value="mRNA"/>
</dbReference>
<dbReference type="PIR" id="T48590">
    <property type="entry name" value="T48590"/>
</dbReference>
<dbReference type="RefSeq" id="NP_568288.1">
    <property type="nucleotide sequence ID" value="NM_121346.3"/>
</dbReference>
<dbReference type="PDB" id="8BEL">
    <property type="method" value="EM"/>
    <property type="resolution" value="2.25 A"/>
    <property type="chains" value="D/N=1-272"/>
</dbReference>
<dbReference type="PDB" id="8BEP">
    <property type="method" value="EM"/>
    <property type="resolution" value="2.29 A"/>
    <property type="chains" value="D/N=1-272"/>
</dbReference>
<dbReference type="PDB" id="8BPX">
    <property type="method" value="EM"/>
    <property type="resolution" value="2.09 A"/>
    <property type="chains" value="AD/BD=1-272"/>
</dbReference>
<dbReference type="PDB" id="8BQ5">
    <property type="method" value="EM"/>
    <property type="resolution" value="2.73 A"/>
    <property type="chains" value="AD/BD=1-272"/>
</dbReference>
<dbReference type="PDB" id="8BQ6">
    <property type="method" value="EM"/>
    <property type="resolution" value="2.80 A"/>
    <property type="chains" value="AD/BD=1-272"/>
</dbReference>
<dbReference type="PDBsum" id="8BEL"/>
<dbReference type="PDBsum" id="8BEP"/>
<dbReference type="PDBsum" id="8BPX"/>
<dbReference type="PDBsum" id="8BQ5"/>
<dbReference type="PDBsum" id="8BQ6"/>
<dbReference type="EMDB" id="EMD-16007"/>
<dbReference type="EMDB" id="EMD-16008"/>
<dbReference type="EMDB" id="EMD-16168"/>
<dbReference type="EMDB" id="EMD-16171"/>
<dbReference type="EMDB" id="EMD-16172"/>
<dbReference type="SMR" id="Q94JS0"/>
<dbReference type="FunCoup" id="Q94JS0">
    <property type="interactions" value="3421"/>
</dbReference>
<dbReference type="IntAct" id="Q94JS0">
    <property type="interactions" value="2"/>
</dbReference>
<dbReference type="STRING" id="3702.Q94JS0"/>
<dbReference type="PaxDb" id="3702-AT5G13430.1"/>
<dbReference type="ProteomicsDB" id="233036"/>
<dbReference type="EnsemblPlants" id="AT5G13430.1">
    <property type="protein sequence ID" value="AT5G13430.1"/>
    <property type="gene ID" value="AT5G13430"/>
</dbReference>
<dbReference type="GeneID" id="831184"/>
<dbReference type="Gramene" id="AT5G13430.1">
    <property type="protein sequence ID" value="AT5G13430.1"/>
    <property type="gene ID" value="AT5G13430"/>
</dbReference>
<dbReference type="KEGG" id="ath:AT5G13430"/>
<dbReference type="Araport" id="AT5G13430"/>
<dbReference type="TAIR" id="AT5G13430">
    <property type="gene designation" value="RISP"/>
</dbReference>
<dbReference type="eggNOG" id="KOG1671">
    <property type="taxonomic scope" value="Eukaryota"/>
</dbReference>
<dbReference type="HOGENOM" id="CLU_055690_0_0_1"/>
<dbReference type="InParanoid" id="Q94JS0"/>
<dbReference type="OMA" id="SAHNHER"/>
<dbReference type="PhylomeDB" id="Q94JS0"/>
<dbReference type="BioCyc" id="ARA:AT5G13430-MONOMER"/>
<dbReference type="BioCyc" id="MetaCyc:AT5G13430-MONOMER"/>
<dbReference type="CD-CODE" id="4299E36E">
    <property type="entry name" value="Nucleolus"/>
</dbReference>
<dbReference type="PRO" id="PR:Q94JS0"/>
<dbReference type="Proteomes" id="UP000006548">
    <property type="component" value="Chromosome 5"/>
</dbReference>
<dbReference type="ExpressionAtlas" id="Q94JS0">
    <property type="expression patterns" value="baseline and differential"/>
</dbReference>
<dbReference type="GO" id="GO:0005743">
    <property type="term" value="C:mitochondrial inner membrane"/>
    <property type="evidence" value="ECO:0007669"/>
    <property type="project" value="UniProtKB-SubCell"/>
</dbReference>
<dbReference type="GO" id="GO:0031966">
    <property type="term" value="C:mitochondrial membrane"/>
    <property type="evidence" value="ECO:0000314"/>
    <property type="project" value="UniProtKB"/>
</dbReference>
<dbReference type="GO" id="GO:0005739">
    <property type="term" value="C:mitochondrion"/>
    <property type="evidence" value="ECO:0000314"/>
    <property type="project" value="TAIR"/>
</dbReference>
<dbReference type="GO" id="GO:0009536">
    <property type="term" value="C:plastid"/>
    <property type="evidence" value="ECO:0007005"/>
    <property type="project" value="TAIR"/>
</dbReference>
<dbReference type="GO" id="GO:0045275">
    <property type="term" value="C:respiratory chain complex III"/>
    <property type="evidence" value="ECO:0000314"/>
    <property type="project" value="UniProtKB"/>
</dbReference>
<dbReference type="GO" id="GO:0051537">
    <property type="term" value="F:2 iron, 2 sulfur cluster binding"/>
    <property type="evidence" value="ECO:0007669"/>
    <property type="project" value="UniProtKB-KW"/>
</dbReference>
<dbReference type="GO" id="GO:0046872">
    <property type="term" value="F:metal ion binding"/>
    <property type="evidence" value="ECO:0000314"/>
    <property type="project" value="TAIR"/>
</dbReference>
<dbReference type="GO" id="GO:0008121">
    <property type="term" value="F:ubiquinol-cytochrome-c reductase activity"/>
    <property type="evidence" value="ECO:0007669"/>
    <property type="project" value="UniProtKB-EC"/>
</dbReference>
<dbReference type="CDD" id="cd03470">
    <property type="entry name" value="Rieske_cytochrome_bc1"/>
    <property type="match status" value="1"/>
</dbReference>
<dbReference type="FunFam" id="2.102.10.10:FF:000001">
    <property type="entry name" value="Cytochrome b-c1 complex subunit Rieske, mitochondrial"/>
    <property type="match status" value="1"/>
</dbReference>
<dbReference type="Gene3D" id="2.102.10.10">
    <property type="entry name" value="Rieske [2Fe-2S] iron-sulphur domain"/>
    <property type="match status" value="1"/>
</dbReference>
<dbReference type="InterPro" id="IPR017941">
    <property type="entry name" value="Rieske_2Fe-2S"/>
</dbReference>
<dbReference type="InterPro" id="IPR036922">
    <property type="entry name" value="Rieske_2Fe-2S_sf"/>
</dbReference>
<dbReference type="InterPro" id="IPR014349">
    <property type="entry name" value="Rieske_Fe-S_prot"/>
</dbReference>
<dbReference type="InterPro" id="IPR005805">
    <property type="entry name" value="Rieske_Fe-S_prot_C"/>
</dbReference>
<dbReference type="InterPro" id="IPR004192">
    <property type="entry name" value="Rieske_TM"/>
</dbReference>
<dbReference type="InterPro" id="IPR006317">
    <property type="entry name" value="Ubiquinol_cyt_c_Rdtase_Fe-S-su"/>
</dbReference>
<dbReference type="NCBIfam" id="TIGR01416">
    <property type="entry name" value="Rieske_proteo"/>
    <property type="match status" value="1"/>
</dbReference>
<dbReference type="PANTHER" id="PTHR10134">
    <property type="entry name" value="CYTOCHROME B-C1 COMPLEX SUBUNIT RIESKE, MITOCHONDRIAL"/>
    <property type="match status" value="1"/>
</dbReference>
<dbReference type="Pfam" id="PF00355">
    <property type="entry name" value="Rieske"/>
    <property type="match status" value="1"/>
</dbReference>
<dbReference type="Pfam" id="PF02921">
    <property type="entry name" value="UCR_TM"/>
    <property type="match status" value="1"/>
</dbReference>
<dbReference type="PRINTS" id="PR00162">
    <property type="entry name" value="RIESKE"/>
</dbReference>
<dbReference type="SUPFAM" id="SSF50022">
    <property type="entry name" value="ISP domain"/>
    <property type="match status" value="1"/>
</dbReference>
<dbReference type="SUPFAM" id="SSF81502">
    <property type="entry name" value="ISP transmembrane anchor"/>
    <property type="match status" value="1"/>
</dbReference>
<dbReference type="PROSITE" id="PS51296">
    <property type="entry name" value="RIESKE"/>
    <property type="match status" value="1"/>
</dbReference>
<comment type="function">
    <text evidence="1">Component of the ubiquinol-cytochrome c oxidoreductase, a multisubunit transmembrane complex that is part of the mitochondrial electron transport chain which drives oxidative phosphorylation. The respiratory chain contains 3 multisubunit complexes succinate dehydrogenase (complex II, CII), ubiquinol-cytochrome c oxidoreductase (cytochrome b-c1 complex, complex III, CIII) and cytochrome c oxidase (complex IV, CIV), that cooperate to transfer electrons derived from NADH and succinate to molecular oxygen, creating an electrochemical gradient over the inner membrane that drives transmembrane transport and the ATP synthase. The cytochrome b-c1 complex catalyzes electron transfer from ubiquinol to cytochrome c, linking this redox reaction to translocation of protons across the mitochondrial inner membrane, with protons being carried across the membrane as hydrogens on the quinol. In the process called Q cycle, 2 protons are consumed from the matrix, 4 protons are released into the intermembrane space and 2 electrons are passed to cytochrome c. The Rieske protein is a catalytic core subunit containing a [2Fe-2S] iron-sulfur cluster. It cycles between 2 conformational states during catalysis to transfer electrons from the quinol bound in the Q(0) site in cytochrome b to cytochrome c1.</text>
</comment>
<comment type="catalytic activity">
    <reaction evidence="1">
        <text>a quinol + 2 Fe(III)-[cytochrome c](out) = a quinone + 2 Fe(II)-[cytochrome c](out) + 2 H(+)(out)</text>
        <dbReference type="Rhea" id="RHEA:11484"/>
        <dbReference type="Rhea" id="RHEA-COMP:10350"/>
        <dbReference type="Rhea" id="RHEA-COMP:14399"/>
        <dbReference type="ChEBI" id="CHEBI:15378"/>
        <dbReference type="ChEBI" id="CHEBI:24646"/>
        <dbReference type="ChEBI" id="CHEBI:29033"/>
        <dbReference type="ChEBI" id="CHEBI:29034"/>
        <dbReference type="ChEBI" id="CHEBI:132124"/>
        <dbReference type="EC" id="7.1.1.8"/>
    </reaction>
</comment>
<comment type="cofactor">
    <cofactor evidence="3">
        <name>[2Fe-2S] cluster</name>
        <dbReference type="ChEBI" id="CHEBI:190135"/>
    </cofactor>
    <text evidence="3 6">Binds 1 [2Fe-2S] cluster per subunit (By similarity). Binds to divalent metal cations (PubMed:12606038).</text>
</comment>
<comment type="subunit">
    <text evidence="5 7 8 9">Component of the ubiquinol-cytochrome c oxidoreductase (cytochrome b-c1 complex, complex III, CIII), a multisubunit enzyme composed of 10 subunits. The complex is composed of 3 respiratory subunits cytochrome b (MT-CYB), cytochrome c1 (CYC1-1 or CYC1-2) and Rieske protein (UCR1-1 or UCR1-2), 2 core protein subunits MPPalpha1 (or MPPalpha2) and MPPB, and 5 low-molecular weight protein subunits QCR7-1 (or QCR7-2), UCRQ-1 (or UCRQ-2), QCR9, UCRY and probably QCR6-1 (or QCR6-2) (PubMed:11870776, PubMed:18189341, PubMed:18305213). The complex exists as an obligatory dimer and forms supercomplexes (SCs) in the inner mitochondrial membrane with NADH-ubiquinone oxidoreductase (complex I, CI), resulting in different assemblies (supercomplexes SCI(1)III(2) and SCI(2)III(4)) (PubMed:12970493).</text>
</comment>
<comment type="subcellular location">
    <subcellularLocation>
        <location evidence="5 6 8">Mitochondrion inner membrane</location>
        <topology evidence="1">Single-pass membrane protein</topology>
    </subcellularLocation>
</comment>
<comment type="miscellaneous">
    <text evidence="1">The Rieske protein is a high potential 2Fe-2S protein.</text>
</comment>
<comment type="similarity">
    <text evidence="11">Belongs to the Rieske iron-sulfur protein family.</text>
</comment>
<comment type="sequence caution" evidence="11">
    <conflict type="erroneous gene model prediction">
        <sequence resource="EMBL-CDS" id="CAB87150"/>
    </conflict>
</comment>
<keyword id="KW-0001">2Fe-2S</keyword>
<keyword id="KW-0002">3D-structure</keyword>
<keyword id="KW-1015">Disulfide bond</keyword>
<keyword id="KW-0249">Electron transport</keyword>
<keyword id="KW-0408">Iron</keyword>
<keyword id="KW-0411">Iron-sulfur</keyword>
<keyword id="KW-0472">Membrane</keyword>
<keyword id="KW-0479">Metal-binding</keyword>
<keyword id="KW-0496">Mitochondrion</keyword>
<keyword id="KW-0999">Mitochondrion inner membrane</keyword>
<keyword id="KW-1185">Reference proteome</keyword>
<keyword id="KW-0679">Respiratory chain</keyword>
<keyword id="KW-0809">Transit peptide</keyword>
<keyword id="KW-1278">Translocase</keyword>
<keyword id="KW-0812">Transmembrane</keyword>
<keyword id="KW-1133">Transmembrane helix</keyword>
<keyword id="KW-0813">Transport</keyword>
<name>UCRI1_ARATH</name>
<sequence>MLRVAGRRLFSVSQRSSTATSFVVSRDHTLSDGGGDSSSAPRSLPSADLSSYHRSLIRGFSSQVLAQGNEIGFGSEVPATVEAVKTPNSKIVYDDHNHERYPPGDPSKRAFAYFVLSGGRFVYASVLRLLVLKLIVSMSASKDVLALASLEVDLGSIEPGTTVTVKWRGKPVFIRRRTEDDIKLANSVDVGSLRDPQEDSVRVKNPEWLVVVGVCTHLGCIPLPNAGDYGGWFCPCHGSHYDISGRIRKGPAPYNLEVPTYSFLEENKLLIG</sequence>
<gene>
    <name evidence="10" type="primary">UCR1-1</name>
    <name evidence="12" type="ordered locus">At5g13430</name>
    <name evidence="13" type="ORF">T22N19.80</name>
</gene>
<proteinExistence type="evidence at protein level"/>
<reference key="1">
    <citation type="journal article" date="2000" name="Nature">
        <title>Sequence and analysis of chromosome 5 of the plant Arabidopsis thaliana.</title>
        <authorList>
            <person name="Tabata S."/>
            <person name="Kaneko T."/>
            <person name="Nakamura Y."/>
            <person name="Kotani H."/>
            <person name="Kato T."/>
            <person name="Asamizu E."/>
            <person name="Miyajima N."/>
            <person name="Sasamoto S."/>
            <person name="Kimura T."/>
            <person name="Hosouchi T."/>
            <person name="Kawashima K."/>
            <person name="Kohara M."/>
            <person name="Matsumoto M."/>
            <person name="Matsuno A."/>
            <person name="Muraki A."/>
            <person name="Nakayama S."/>
            <person name="Nakazaki N."/>
            <person name="Naruo K."/>
            <person name="Okumura S."/>
            <person name="Shinpo S."/>
            <person name="Takeuchi C."/>
            <person name="Wada T."/>
            <person name="Watanabe A."/>
            <person name="Yamada M."/>
            <person name="Yasuda M."/>
            <person name="Sato S."/>
            <person name="de la Bastide M."/>
            <person name="Huang E."/>
            <person name="Spiegel L."/>
            <person name="Gnoj L."/>
            <person name="O'Shaughnessy A."/>
            <person name="Preston R."/>
            <person name="Habermann K."/>
            <person name="Murray J."/>
            <person name="Johnson D."/>
            <person name="Rohlfing T."/>
            <person name="Nelson J."/>
            <person name="Stoneking T."/>
            <person name="Pepin K."/>
            <person name="Spieth J."/>
            <person name="Sekhon M."/>
            <person name="Armstrong J."/>
            <person name="Becker M."/>
            <person name="Belter E."/>
            <person name="Cordum H."/>
            <person name="Cordes M."/>
            <person name="Courtney L."/>
            <person name="Courtney W."/>
            <person name="Dante M."/>
            <person name="Du H."/>
            <person name="Edwards J."/>
            <person name="Fryman J."/>
            <person name="Haakensen B."/>
            <person name="Lamar E."/>
            <person name="Latreille P."/>
            <person name="Leonard S."/>
            <person name="Meyer R."/>
            <person name="Mulvaney E."/>
            <person name="Ozersky P."/>
            <person name="Riley A."/>
            <person name="Strowmatt C."/>
            <person name="Wagner-McPherson C."/>
            <person name="Wollam A."/>
            <person name="Yoakum M."/>
            <person name="Bell M."/>
            <person name="Dedhia N."/>
            <person name="Parnell L."/>
            <person name="Shah R."/>
            <person name="Rodriguez M."/>
            <person name="Hoon See L."/>
            <person name="Vil D."/>
            <person name="Baker J."/>
            <person name="Kirchoff K."/>
            <person name="Toth K."/>
            <person name="King L."/>
            <person name="Bahret A."/>
            <person name="Miller B."/>
            <person name="Marra M.A."/>
            <person name="Martienssen R."/>
            <person name="McCombie W.R."/>
            <person name="Wilson R.K."/>
            <person name="Murphy G."/>
            <person name="Bancroft I."/>
            <person name="Volckaert G."/>
            <person name="Wambutt R."/>
            <person name="Duesterhoeft A."/>
            <person name="Stiekema W."/>
            <person name="Pohl T."/>
            <person name="Entian K.-D."/>
            <person name="Terryn N."/>
            <person name="Hartley N."/>
            <person name="Bent E."/>
            <person name="Johnson S."/>
            <person name="Langham S.-A."/>
            <person name="McCullagh B."/>
            <person name="Robben J."/>
            <person name="Grymonprez B."/>
            <person name="Zimmermann W."/>
            <person name="Ramsperger U."/>
            <person name="Wedler H."/>
            <person name="Balke K."/>
            <person name="Wedler E."/>
            <person name="Peters S."/>
            <person name="van Staveren M."/>
            <person name="Dirkse W."/>
            <person name="Mooijman P."/>
            <person name="Klein Lankhorst R."/>
            <person name="Weitzenegger T."/>
            <person name="Bothe G."/>
            <person name="Rose M."/>
            <person name="Hauf J."/>
            <person name="Berneiser S."/>
            <person name="Hempel S."/>
            <person name="Feldpausch M."/>
            <person name="Lamberth S."/>
            <person name="Villarroel R."/>
            <person name="Gielen J."/>
            <person name="Ardiles W."/>
            <person name="Bents O."/>
            <person name="Lemcke K."/>
            <person name="Kolesov G."/>
            <person name="Mayer K.F.X."/>
            <person name="Rudd S."/>
            <person name="Schoof H."/>
            <person name="Schueller C."/>
            <person name="Zaccaria P."/>
            <person name="Mewes H.-W."/>
            <person name="Bevan M."/>
            <person name="Fransz P.F."/>
        </authorList>
    </citation>
    <scope>NUCLEOTIDE SEQUENCE [LARGE SCALE GENOMIC DNA]</scope>
    <source>
        <strain>cv. Columbia</strain>
    </source>
</reference>
<reference key="2">
    <citation type="journal article" date="2017" name="Plant J.">
        <title>Araport11: a complete reannotation of the Arabidopsis thaliana reference genome.</title>
        <authorList>
            <person name="Cheng C.Y."/>
            <person name="Krishnakumar V."/>
            <person name="Chan A.P."/>
            <person name="Thibaud-Nissen F."/>
            <person name="Schobel S."/>
            <person name="Town C.D."/>
        </authorList>
    </citation>
    <scope>GENOME REANNOTATION</scope>
    <source>
        <strain>cv. Columbia</strain>
    </source>
</reference>
<reference key="3">
    <citation type="journal article" date="2003" name="Science">
        <title>Empirical analysis of transcriptional activity in the Arabidopsis genome.</title>
        <authorList>
            <person name="Yamada K."/>
            <person name="Lim J."/>
            <person name="Dale J.M."/>
            <person name="Chen H."/>
            <person name="Shinn P."/>
            <person name="Palm C.J."/>
            <person name="Southwick A.M."/>
            <person name="Wu H.C."/>
            <person name="Kim C.J."/>
            <person name="Nguyen M."/>
            <person name="Pham P.K."/>
            <person name="Cheuk R.F."/>
            <person name="Karlin-Newmann G."/>
            <person name="Liu S.X."/>
            <person name="Lam B."/>
            <person name="Sakano H."/>
            <person name="Wu T."/>
            <person name="Yu G."/>
            <person name="Miranda M."/>
            <person name="Quach H.L."/>
            <person name="Tripp M."/>
            <person name="Chang C.H."/>
            <person name="Lee J.M."/>
            <person name="Toriumi M.J."/>
            <person name="Chan M.M."/>
            <person name="Tang C.C."/>
            <person name="Onodera C.S."/>
            <person name="Deng J.M."/>
            <person name="Akiyama K."/>
            <person name="Ansari Y."/>
            <person name="Arakawa T."/>
            <person name="Banh J."/>
            <person name="Banno F."/>
            <person name="Bowser L."/>
            <person name="Brooks S.Y."/>
            <person name="Carninci P."/>
            <person name="Chao Q."/>
            <person name="Choy N."/>
            <person name="Enju A."/>
            <person name="Goldsmith A.D."/>
            <person name="Gurjal M."/>
            <person name="Hansen N.F."/>
            <person name="Hayashizaki Y."/>
            <person name="Johnson-Hopson C."/>
            <person name="Hsuan V.W."/>
            <person name="Iida K."/>
            <person name="Karnes M."/>
            <person name="Khan S."/>
            <person name="Koesema E."/>
            <person name="Ishida J."/>
            <person name="Jiang P.X."/>
            <person name="Jones T."/>
            <person name="Kawai J."/>
            <person name="Kamiya A."/>
            <person name="Meyers C."/>
            <person name="Nakajima M."/>
            <person name="Narusaka M."/>
            <person name="Seki M."/>
            <person name="Sakurai T."/>
            <person name="Satou M."/>
            <person name="Tamse R."/>
            <person name="Vaysberg M."/>
            <person name="Wallender E.K."/>
            <person name="Wong C."/>
            <person name="Yamamura Y."/>
            <person name="Yuan S."/>
            <person name="Shinozaki K."/>
            <person name="Davis R.W."/>
            <person name="Theologis A."/>
            <person name="Ecker J.R."/>
        </authorList>
    </citation>
    <scope>NUCLEOTIDE SEQUENCE [LARGE SCALE MRNA]</scope>
    <source>
        <strain>cv. Columbia</strain>
    </source>
</reference>
<reference key="4">
    <citation type="submission" date="2002-03" db="EMBL/GenBank/DDBJ databases">
        <title>Full-length cDNA from Arabidopsis thaliana.</title>
        <authorList>
            <person name="Brover V.V."/>
            <person name="Troukhan M.E."/>
            <person name="Alexandrov N.A."/>
            <person name="Lu Y.-P."/>
            <person name="Flavell R.B."/>
            <person name="Feldmann K.A."/>
        </authorList>
    </citation>
    <scope>NUCLEOTIDE SEQUENCE [LARGE SCALE MRNA]</scope>
</reference>
<reference key="5">
    <citation type="submission" date="2005-03" db="EMBL/GenBank/DDBJ databases">
        <title>Large-scale analysis of RIKEN Arabidopsis full-length (RAFL) cDNAs.</title>
        <authorList>
            <person name="Totoki Y."/>
            <person name="Seki M."/>
            <person name="Ishida J."/>
            <person name="Nakajima M."/>
            <person name="Enju A."/>
            <person name="Kamiya A."/>
            <person name="Narusaka M."/>
            <person name="Shin-i T."/>
            <person name="Nakagawa M."/>
            <person name="Sakamoto N."/>
            <person name="Oishi K."/>
            <person name="Kohara Y."/>
            <person name="Kobayashi M."/>
            <person name="Toyoda A."/>
            <person name="Sakaki Y."/>
            <person name="Sakurai T."/>
            <person name="Iida K."/>
            <person name="Akiyama K."/>
            <person name="Satou M."/>
            <person name="Toyoda T."/>
            <person name="Konagaya A."/>
            <person name="Carninci P."/>
            <person name="Kawai J."/>
            <person name="Hayashizaki Y."/>
            <person name="Shinozaki K."/>
        </authorList>
    </citation>
    <scope>NUCLEOTIDE SEQUENCE [LARGE SCALE MRNA] OF 93-272</scope>
    <source>
        <strain>cv. Columbia</strain>
    </source>
</reference>
<reference key="6">
    <citation type="submission" date="1993-10" db="EMBL/GenBank/DDBJ databases">
        <title>The Arabidopsis thaliana transcribed genome: the GDR cDNA program.</title>
        <authorList>
            <person name="Desprez T."/>
            <person name="Amselem J."/>
            <person name="Chiapello H."/>
            <person name="Caboche M."/>
            <person name="Hofte H."/>
        </authorList>
    </citation>
    <scope>NUCLEOTIDE SEQUENCE [LARGE SCALE MRNA] OF 197-272</scope>
    <source>
        <strain>cv. Columbia</strain>
        <tissue>Seedling</tissue>
    </source>
</reference>
<reference key="7">
    <citation type="journal article" date="2002" name="Electrophoresis">
        <title>Biochemical dissection of the mitochondrial proteome from Arabidopsis thaliana by three-dimensional gel electrophoresis.</title>
        <authorList>
            <person name="Werhahn W."/>
            <person name="Braun H.P."/>
        </authorList>
    </citation>
    <scope>SUBCELLULAR LOCATION</scope>
    <scope>SUBUNIT</scope>
</reference>
<reference key="8">
    <citation type="journal article" date="2003" name="FEBS Lett.">
        <title>Proteomic identification of divalent metal cation binding proteins in plant mitochondria.</title>
        <authorList>
            <person name="Herald V.L."/>
            <person name="Heazlewood J.L."/>
            <person name="Day D.A."/>
            <person name="Millar A.H."/>
        </authorList>
    </citation>
    <scope>SUBCELLULAR LOCATION</scope>
    <scope>METAL-BINDING</scope>
    <scope>IDENTIFICATION BY MASS SPECTROMETRY</scope>
</reference>
<reference key="9">
    <citation type="journal article" date="2003" name="Plant Physiol.">
        <title>New insights into the respiratory chain of plant mitochondria. Supercomplexes and a unique composition of complex II.</title>
        <authorList>
            <person name="Eubel H."/>
            <person name="Jansch L."/>
            <person name="Braun H.P."/>
        </authorList>
    </citation>
    <scope>SUBUNIT</scope>
</reference>
<reference key="10">
    <citation type="journal article" date="2008" name="J. Proteome Res.">
        <title>Resolving and identifying protein components of plant mitochondrial respiratory complexes using three dimensions of gel electrophoresis.</title>
        <authorList>
            <person name="Meyer E.H."/>
            <person name="Taylor N.L."/>
            <person name="Millar A.H."/>
        </authorList>
    </citation>
    <scope>SUBCELLULAR LOCATION</scope>
    <scope>SUBUNIT</scope>
    <scope>IDENTIFICATION BY MASS SPECTROMETRY</scope>
</reference>
<reference key="11">
    <citation type="journal article" date="2008" name="Plant Physiol.">
        <title>Arabidopsis PPR40 connects abiotic stress responses to mitochondrial electron transport.</title>
        <authorList>
            <person name="Zsigmond L."/>
            <person name="Rigo G."/>
            <person name="Szarka A."/>
            <person name="Szekely G."/>
            <person name="Oetvoes K."/>
            <person name="Darula Z."/>
            <person name="Medzihradszky K.F."/>
            <person name="Koncz C."/>
            <person name="Koncz Z."/>
            <person name="Szabados L."/>
        </authorList>
    </citation>
    <scope>SUBUNIT</scope>
    <scope>IDENTIFICATION BY MASS SPECTROMETRY</scope>
    <scope>NOMENCLATURE</scope>
    <source>
        <strain>cv. Columbia</strain>
    </source>
</reference>
<organism>
    <name type="scientific">Arabidopsis thaliana</name>
    <name type="common">Mouse-ear cress</name>
    <dbReference type="NCBI Taxonomy" id="3702"/>
    <lineage>
        <taxon>Eukaryota</taxon>
        <taxon>Viridiplantae</taxon>
        <taxon>Streptophyta</taxon>
        <taxon>Embryophyta</taxon>
        <taxon>Tracheophyta</taxon>
        <taxon>Spermatophyta</taxon>
        <taxon>Magnoliopsida</taxon>
        <taxon>eudicotyledons</taxon>
        <taxon>Gunneridae</taxon>
        <taxon>Pentapetalae</taxon>
        <taxon>rosids</taxon>
        <taxon>malvids</taxon>
        <taxon>Brassicales</taxon>
        <taxon>Brassicaceae</taxon>
        <taxon>Camelineae</taxon>
        <taxon>Arabidopsis</taxon>
    </lineage>
</organism>
<evidence type="ECO:0000250" key="1">
    <source>
        <dbReference type="UniProtKB" id="P08067"/>
    </source>
</evidence>
<evidence type="ECO:0000255" key="2"/>
<evidence type="ECO:0000255" key="3">
    <source>
        <dbReference type="PROSITE-ProRule" id="PRU00628"/>
    </source>
</evidence>
<evidence type="ECO:0000256" key="4">
    <source>
        <dbReference type="SAM" id="MobiDB-lite"/>
    </source>
</evidence>
<evidence type="ECO:0000269" key="5">
    <source>
    </source>
</evidence>
<evidence type="ECO:0000269" key="6">
    <source>
    </source>
</evidence>
<evidence type="ECO:0000269" key="7">
    <source>
    </source>
</evidence>
<evidence type="ECO:0000269" key="8">
    <source>
    </source>
</evidence>
<evidence type="ECO:0000269" key="9">
    <source>
    </source>
</evidence>
<evidence type="ECO:0000303" key="10">
    <source>
    </source>
</evidence>
<evidence type="ECO:0000305" key="11"/>
<evidence type="ECO:0000312" key="12">
    <source>
        <dbReference type="Araport" id="AT5G13430"/>
    </source>
</evidence>
<evidence type="ECO:0000312" key="13">
    <source>
        <dbReference type="EMBL" id="CAB87150.1"/>
    </source>
</evidence>
<evidence type="ECO:0007829" key="14">
    <source>
        <dbReference type="PDB" id="8BEL"/>
    </source>
</evidence>
<evidence type="ECO:0007829" key="15">
    <source>
        <dbReference type="PDB" id="8BEP"/>
    </source>
</evidence>
<accession>Q94JS0</accession>
<accession>Q42140</accession>
<accession>Q56Z01</accession>
<accession>Q56Z95</accession>
<accession>Q8LEK8</accession>
<accession>Q9LYR3</accession>